<comment type="function">
    <text evidence="1 5 6">Acyltransferase; part of the gene cluster that mediates the biosynthesis of monakolin K, also known as lovastatin, and which acts as a potent competitive inhibitor of HMG-CoA reductase (PubMed:18578535). Monakolin K biosynthesis is performed in two stages (PubMed:19693441). The first stage is catalyzed by the nonaketide synthase mokA, which belongs to type I polyketide synthases and catalyzes the iterative nine-step formation of the polyketide (PubMed:18578535, PubMed:19693441). This PKS stage is completed by the action of dehydrogenase mokE, which catalyzes the NADPH-dependent reduction of the unsaturated tetra-, penta- and heptaketide intermediates that arise during the mokA-mediated biosynthesis of the nonaketide chain and leads to dihydromonacolin L (PubMed:19693441). Covalently bound dihydromonacolin L is released from mokA by the mokD esterase (By similarity). Conversion of dihydromonacolin L into monacolin L and then monacolin J is subsequently performed with the participation of molecular oxygen and P450 monoogygenase mokC (PubMed:19693441). Finally, mokF performs the conversion of monacoline J to monacoline K through the addition of the side-chain diketide moiety (2R)-2-methylbutanoate produced by the diketide synthase mokB (PubMed:19693441).</text>
</comment>
<comment type="catalytic activity">
    <reaction evidence="2">
        <text>monacolin J carboxylate + (S)-2-methylbutanoyl-[2-methylbutanoate polyketide synthase] = lovastatin carboxylate + holo-[2-methylbutanoate polyketide synthase]</text>
        <dbReference type="Rhea" id="RHEA:43064"/>
        <dbReference type="Rhea" id="RHEA-COMP:10260"/>
        <dbReference type="Rhea" id="RHEA-COMP:10261"/>
        <dbReference type="ChEBI" id="CHEBI:64479"/>
        <dbReference type="ChEBI" id="CHEBI:79035"/>
        <dbReference type="ChEBI" id="CHEBI:79038"/>
        <dbReference type="ChEBI" id="CHEBI:82764"/>
        <dbReference type="EC" id="2.3.1.238"/>
    </reaction>
</comment>
<comment type="pathway">
    <text evidence="2">Polyketide biosynthesis; lovastatin biosynthesis.</text>
</comment>
<comment type="induction">
    <text evidence="3">Expression is controlled by the monacolin K cluster transcription regulator mokH (PubMed:19968298).</text>
</comment>
<comment type="biotechnology">
    <text evidence="4">Monacoline K acts as an inhibitor of HMG-CoA reductase involved in cholesterogenesis (PubMed:21821946). Its hypocholesterolemic activity might be useful for lowering cholesterol levels in the blood and reduce artherosclerosis and coronary heart disease (PubMed:21821946).</text>
</comment>
<comment type="similarity">
    <text evidence="7">Belongs to the class-A beta-lactamase family.</text>
</comment>
<name>MOKF_MONPI</name>
<proteinExistence type="evidence at protein level"/>
<sequence>MRQFLSSDRINSEIPQEKSEMVGFSDIDNSSRQIKEMEAAFRSAVKTGQIPGAVIMARDHSGRLNYTRCFGARTVVRDECNRLPPMQVDTPCRLASATKLLTTIMALQCVERGLVRLDETVDRLLPDLSAMKVLEGFDAAGEPKMRERKGKITLKHLLTHTSGLSYVFLHPLLREYMAKGHLQTAEKFGIQSRLAPPAVNDPGAEWIYGANLDWTGKLVERATGLDLEQYLQENICAPLNITDMTFKLQQRPDLLARRADQTHRNKADGRLRYDDSVYFRSDGDECFGGQGVFSGPESYMKVVHSLLQRDGRLLRPETVDLMFQPALDAQTEKQMNQHMDASPHINYGGPMPMVLRRSFGLGGMIALEDLDGQKWRRKGCLTFGGGPNIVWVMLLSALRFVFFFFFFFFFCSS</sequence>
<gene>
    <name evidence="5" type="primary">mokF</name>
</gene>
<keyword id="KW-0012">Acyltransferase</keyword>
<keyword id="KW-0378">Hydrolase</keyword>
<keyword id="KW-0808">Transferase</keyword>
<evidence type="ECO:0000250" key="1">
    <source>
        <dbReference type="UniProtKB" id="Q0C8M2"/>
    </source>
</evidence>
<evidence type="ECO:0000250" key="2">
    <source>
        <dbReference type="UniProtKB" id="Q9Y7D1"/>
    </source>
</evidence>
<evidence type="ECO:0000269" key="3">
    <source>
    </source>
</evidence>
<evidence type="ECO:0000269" key="4">
    <source>
    </source>
</evidence>
<evidence type="ECO:0000303" key="5">
    <source>
    </source>
</evidence>
<evidence type="ECO:0000303" key="6">
    <source>
    </source>
</evidence>
<evidence type="ECO:0000305" key="7"/>
<evidence type="ECO:0000312" key="8">
    <source>
        <dbReference type="EMBL" id="ABA02244.1"/>
    </source>
</evidence>
<organism evidence="8">
    <name type="scientific">Monascus pilosus</name>
    <name type="common">Red mold</name>
    <dbReference type="NCBI Taxonomy" id="89488"/>
    <lineage>
        <taxon>Eukaryota</taxon>
        <taxon>Fungi</taxon>
        <taxon>Dikarya</taxon>
        <taxon>Ascomycota</taxon>
        <taxon>Pezizomycotina</taxon>
        <taxon>Eurotiomycetes</taxon>
        <taxon>Eurotiomycetidae</taxon>
        <taxon>Eurotiales</taxon>
        <taxon>Aspergillaceae</taxon>
        <taxon>Monascus</taxon>
    </lineage>
</organism>
<feature type="chain" id="PRO_0000436287" description="Acyltransferase mokF">
    <location>
        <begin position="1"/>
        <end position="413"/>
    </location>
</feature>
<feature type="active site" description="Acyl-ester intermediate" evidence="2">
    <location>
        <position position="96"/>
    </location>
</feature>
<feature type="binding site" evidence="2">
    <location>
        <position position="93"/>
    </location>
    <ligand>
        <name>monacolin J</name>
        <dbReference type="ChEBI" id="CHEBI:79034"/>
    </ligand>
</feature>
<feature type="binding site" evidence="2">
    <location>
        <position position="193"/>
    </location>
    <ligand>
        <name>monacolin J</name>
        <dbReference type="ChEBI" id="CHEBI:79034"/>
    </ligand>
</feature>
<feature type="binding site" evidence="2">
    <location>
        <position position="208"/>
    </location>
    <ligand>
        <name>monacolin J</name>
        <dbReference type="ChEBI" id="CHEBI:79034"/>
    </ligand>
</feature>
<feature type="binding site" evidence="2">
    <location>
        <position position="278"/>
    </location>
    <ligand>
        <name>monacolin J</name>
        <dbReference type="ChEBI" id="CHEBI:79034"/>
    </ligand>
</feature>
<feature type="binding site" evidence="2">
    <location>
        <position position="386"/>
    </location>
    <ligand>
        <name>2-methylbutanoate</name>
        <dbReference type="ChEBI" id="CHEBI:48946"/>
    </ligand>
</feature>
<accession>Q3S2U2</accession>
<protein>
    <recommendedName>
        <fullName evidence="7">Acyltransferase mokF</fullName>
        <ecNumber evidence="2">2.3.1.238</ecNumber>
    </recommendedName>
    <alternativeName>
        <fullName evidence="2">Lovastatin hydrolase</fullName>
    </alternativeName>
    <alternativeName>
        <fullName evidence="5">Monacolin K biosynthesis protein F</fullName>
    </alternativeName>
</protein>
<dbReference type="EC" id="2.3.1.238" evidence="2"/>
<dbReference type="EMBL" id="DQ176595">
    <property type="protein sequence ID" value="ABA02244.1"/>
    <property type="molecule type" value="Genomic_DNA"/>
</dbReference>
<dbReference type="SMR" id="Q3S2U2"/>
<dbReference type="UniPathway" id="UPA00875"/>
<dbReference type="GO" id="GO:0016746">
    <property type="term" value="F:acyltransferase activity"/>
    <property type="evidence" value="ECO:0007669"/>
    <property type="project" value="UniProtKB-KW"/>
</dbReference>
<dbReference type="GO" id="GO:0016787">
    <property type="term" value="F:hydrolase activity"/>
    <property type="evidence" value="ECO:0007669"/>
    <property type="project" value="UniProtKB-KW"/>
</dbReference>
<dbReference type="Gene3D" id="3.40.710.10">
    <property type="entry name" value="DD-peptidase/beta-lactamase superfamily"/>
    <property type="match status" value="1"/>
</dbReference>
<dbReference type="InterPro" id="IPR001466">
    <property type="entry name" value="Beta-lactam-related"/>
</dbReference>
<dbReference type="InterPro" id="IPR012338">
    <property type="entry name" value="Beta-lactam/transpept-like"/>
</dbReference>
<dbReference type="InterPro" id="IPR050789">
    <property type="entry name" value="Diverse_Enzym_Activities"/>
</dbReference>
<dbReference type="PANTHER" id="PTHR43283:SF17">
    <property type="entry name" value="(LOVD), PUTATIVE (AFU_ORTHOLOGUE AFUA_5G00920)-RELATED"/>
    <property type="match status" value="1"/>
</dbReference>
<dbReference type="PANTHER" id="PTHR43283">
    <property type="entry name" value="BETA-LACTAMASE-RELATED"/>
    <property type="match status" value="1"/>
</dbReference>
<dbReference type="Pfam" id="PF00144">
    <property type="entry name" value="Beta-lactamase"/>
    <property type="match status" value="1"/>
</dbReference>
<dbReference type="SUPFAM" id="SSF56601">
    <property type="entry name" value="beta-lactamase/transpeptidase-like"/>
    <property type="match status" value="1"/>
</dbReference>
<reference key="1">
    <citation type="journal article" date="2008" name="J. Agric. Food Chem.">
        <title>Cloning and characterization of monacolin K biosynthetic gene cluster from Monascus pilosus.</title>
        <authorList>
            <person name="Chen Y.P."/>
            <person name="Tseng C.P."/>
            <person name="Liaw L.L."/>
            <person name="Wang C.L."/>
            <person name="Chen I.C."/>
            <person name="Wu W.J."/>
            <person name="Wu M.D."/>
            <person name="Yuan G.F."/>
        </authorList>
    </citation>
    <scope>NUCLEOTIDE SEQUENCE [GENOMIC DNA]</scope>
    <scope>FUNCTION</scope>
</reference>
<reference key="2">
    <citation type="journal article" date="2009" name="Biotechnol. Lett.">
        <title>Identification of mokB involved in monacolin K biosynthesis in Monascus pilosus.</title>
        <authorList>
            <person name="Sakai K."/>
            <person name="Kinoshita H."/>
            <person name="Nihira T."/>
        </authorList>
    </citation>
    <scope>FUNCTION</scope>
</reference>
<reference key="3">
    <citation type="journal article" date="2010" name="J. Agric. Food Chem.">
        <title>Identification of the mokH gene encoding transcription factor for the upregulation of monacolin K biosynthesis in Monascus pilosus.</title>
        <authorList>
            <person name="Chen Y.-P."/>
            <person name="Yuan G.-F."/>
            <person name="Hsieh S.-Y."/>
            <person name="Lin Y.-S."/>
            <person name="Wang W.-Y."/>
            <person name="Liaw L.-L."/>
            <person name="Tseng C.-P."/>
        </authorList>
    </citation>
    <scope>INDUCTION</scope>
</reference>
<reference key="4">
    <citation type="journal article" date="2011" name="Biosci. Biotechnol. Biochem.">
        <title>Simultaneous enrichment of deglycosylated ginsenosides and monacolin K in red ginseng by fermentation with Monascus pilosus.</title>
        <authorList>
            <person name="Hong S.Y."/>
            <person name="Oh J.H."/>
            <person name="Lee I."/>
        </authorList>
    </citation>
    <scope>BIOTECHNOLOGY</scope>
</reference>